<gene>
    <name type="primary">PARN</name>
    <name type="synonym">DAN</name>
</gene>
<reference key="1">
    <citation type="journal article" date="1998" name="EMBO J.">
        <title>The deadenylating nuclease (DAN) is involved in poly(A) tail removal during the meiotic maturation of Xenopus oocytes.</title>
        <authorList>
            <person name="Koerner C.G."/>
            <person name="Wormington M."/>
            <person name="Muckenthaler M."/>
            <person name="Schneider S."/>
            <person name="Dehlin E."/>
            <person name="Wahle E."/>
        </authorList>
    </citation>
    <scope>NUCLEOTIDE SEQUENCE [MRNA] (ISOFORM 1)</scope>
    <scope>FUNCTION</scope>
    <scope>ENZYME ACTIVITY</scope>
    <scope>SUBCELLULAR LOCATION</scope>
    <scope>TISSUE SPECIFICITY</scope>
</reference>
<reference key="2">
    <citation type="journal article" date="2004" name="Nat. Genet.">
        <title>Complete sequencing and characterization of 21,243 full-length human cDNAs.</title>
        <authorList>
            <person name="Ota T."/>
            <person name="Suzuki Y."/>
            <person name="Nishikawa T."/>
            <person name="Otsuki T."/>
            <person name="Sugiyama T."/>
            <person name="Irie R."/>
            <person name="Wakamatsu A."/>
            <person name="Hayashi K."/>
            <person name="Sato H."/>
            <person name="Nagai K."/>
            <person name="Kimura K."/>
            <person name="Makita H."/>
            <person name="Sekine M."/>
            <person name="Obayashi M."/>
            <person name="Nishi T."/>
            <person name="Shibahara T."/>
            <person name="Tanaka T."/>
            <person name="Ishii S."/>
            <person name="Yamamoto J."/>
            <person name="Saito K."/>
            <person name="Kawai Y."/>
            <person name="Isono Y."/>
            <person name="Nakamura Y."/>
            <person name="Nagahari K."/>
            <person name="Murakami K."/>
            <person name="Yasuda T."/>
            <person name="Iwayanagi T."/>
            <person name="Wagatsuma M."/>
            <person name="Shiratori A."/>
            <person name="Sudo H."/>
            <person name="Hosoiri T."/>
            <person name="Kaku Y."/>
            <person name="Kodaira H."/>
            <person name="Kondo H."/>
            <person name="Sugawara M."/>
            <person name="Takahashi M."/>
            <person name="Kanda K."/>
            <person name="Yokoi T."/>
            <person name="Furuya T."/>
            <person name="Kikkawa E."/>
            <person name="Omura Y."/>
            <person name="Abe K."/>
            <person name="Kamihara K."/>
            <person name="Katsuta N."/>
            <person name="Sato K."/>
            <person name="Tanikawa M."/>
            <person name="Yamazaki M."/>
            <person name="Ninomiya K."/>
            <person name="Ishibashi T."/>
            <person name="Yamashita H."/>
            <person name="Murakawa K."/>
            <person name="Fujimori K."/>
            <person name="Tanai H."/>
            <person name="Kimata M."/>
            <person name="Watanabe M."/>
            <person name="Hiraoka S."/>
            <person name="Chiba Y."/>
            <person name="Ishida S."/>
            <person name="Ono Y."/>
            <person name="Takiguchi S."/>
            <person name="Watanabe S."/>
            <person name="Yosida M."/>
            <person name="Hotuta T."/>
            <person name="Kusano J."/>
            <person name="Kanehori K."/>
            <person name="Takahashi-Fujii A."/>
            <person name="Hara H."/>
            <person name="Tanase T.-O."/>
            <person name="Nomura Y."/>
            <person name="Togiya S."/>
            <person name="Komai F."/>
            <person name="Hara R."/>
            <person name="Takeuchi K."/>
            <person name="Arita M."/>
            <person name="Imose N."/>
            <person name="Musashino K."/>
            <person name="Yuuki H."/>
            <person name="Oshima A."/>
            <person name="Sasaki N."/>
            <person name="Aotsuka S."/>
            <person name="Yoshikawa Y."/>
            <person name="Matsunawa H."/>
            <person name="Ichihara T."/>
            <person name="Shiohata N."/>
            <person name="Sano S."/>
            <person name="Moriya S."/>
            <person name="Momiyama H."/>
            <person name="Satoh N."/>
            <person name="Takami S."/>
            <person name="Terashima Y."/>
            <person name="Suzuki O."/>
            <person name="Nakagawa S."/>
            <person name="Senoh A."/>
            <person name="Mizoguchi H."/>
            <person name="Goto Y."/>
            <person name="Shimizu F."/>
            <person name="Wakebe H."/>
            <person name="Hishigaki H."/>
            <person name="Watanabe T."/>
            <person name="Sugiyama A."/>
            <person name="Takemoto M."/>
            <person name="Kawakami B."/>
            <person name="Yamazaki M."/>
            <person name="Watanabe K."/>
            <person name="Kumagai A."/>
            <person name="Itakura S."/>
            <person name="Fukuzumi Y."/>
            <person name="Fujimori Y."/>
            <person name="Komiyama M."/>
            <person name="Tashiro H."/>
            <person name="Tanigami A."/>
            <person name="Fujiwara T."/>
            <person name="Ono T."/>
            <person name="Yamada K."/>
            <person name="Fujii Y."/>
            <person name="Ozaki K."/>
            <person name="Hirao M."/>
            <person name="Ohmori Y."/>
            <person name="Kawabata A."/>
            <person name="Hikiji T."/>
            <person name="Kobatake N."/>
            <person name="Inagaki H."/>
            <person name="Ikema Y."/>
            <person name="Okamoto S."/>
            <person name="Okitani R."/>
            <person name="Kawakami T."/>
            <person name="Noguchi S."/>
            <person name="Itoh T."/>
            <person name="Shigeta K."/>
            <person name="Senba T."/>
            <person name="Matsumura K."/>
            <person name="Nakajima Y."/>
            <person name="Mizuno T."/>
            <person name="Morinaga M."/>
            <person name="Sasaki M."/>
            <person name="Togashi T."/>
            <person name="Oyama M."/>
            <person name="Hata H."/>
            <person name="Watanabe M."/>
            <person name="Komatsu T."/>
            <person name="Mizushima-Sugano J."/>
            <person name="Satoh T."/>
            <person name="Shirai Y."/>
            <person name="Takahashi Y."/>
            <person name="Nakagawa K."/>
            <person name="Okumura K."/>
            <person name="Nagase T."/>
            <person name="Nomura N."/>
            <person name="Kikuchi H."/>
            <person name="Masuho Y."/>
            <person name="Yamashita R."/>
            <person name="Nakai K."/>
            <person name="Yada T."/>
            <person name="Nakamura Y."/>
            <person name="Ohara O."/>
            <person name="Isogai T."/>
            <person name="Sugano S."/>
        </authorList>
    </citation>
    <scope>NUCLEOTIDE SEQUENCE [LARGE SCALE MRNA] (ISOFORMS 1; 2; 3 AND 4)</scope>
    <source>
        <tissue>Adrenal gland</tissue>
        <tissue>Brain</tissue>
        <tissue>Esophagus</tissue>
        <tissue>Placenta</tissue>
    </source>
</reference>
<reference key="3">
    <citation type="journal article" date="2004" name="Nature">
        <title>The sequence and analysis of duplication-rich human chromosome 16.</title>
        <authorList>
            <person name="Martin J."/>
            <person name="Han C."/>
            <person name="Gordon L.A."/>
            <person name="Terry A."/>
            <person name="Prabhakar S."/>
            <person name="She X."/>
            <person name="Xie G."/>
            <person name="Hellsten U."/>
            <person name="Chan Y.M."/>
            <person name="Altherr M."/>
            <person name="Couronne O."/>
            <person name="Aerts A."/>
            <person name="Bajorek E."/>
            <person name="Black S."/>
            <person name="Blumer H."/>
            <person name="Branscomb E."/>
            <person name="Brown N.C."/>
            <person name="Bruno W.J."/>
            <person name="Buckingham J.M."/>
            <person name="Callen D.F."/>
            <person name="Campbell C.S."/>
            <person name="Campbell M.L."/>
            <person name="Campbell E.W."/>
            <person name="Caoile C."/>
            <person name="Challacombe J.F."/>
            <person name="Chasteen L.A."/>
            <person name="Chertkov O."/>
            <person name="Chi H.C."/>
            <person name="Christensen M."/>
            <person name="Clark L.M."/>
            <person name="Cohn J.D."/>
            <person name="Denys M."/>
            <person name="Detter J.C."/>
            <person name="Dickson M."/>
            <person name="Dimitrijevic-Bussod M."/>
            <person name="Escobar J."/>
            <person name="Fawcett J.J."/>
            <person name="Flowers D."/>
            <person name="Fotopulos D."/>
            <person name="Glavina T."/>
            <person name="Gomez M."/>
            <person name="Gonzales E."/>
            <person name="Goodstein D."/>
            <person name="Goodwin L.A."/>
            <person name="Grady D.L."/>
            <person name="Grigoriev I."/>
            <person name="Groza M."/>
            <person name="Hammon N."/>
            <person name="Hawkins T."/>
            <person name="Haydu L."/>
            <person name="Hildebrand C.E."/>
            <person name="Huang W."/>
            <person name="Israni S."/>
            <person name="Jett J."/>
            <person name="Jewett P.B."/>
            <person name="Kadner K."/>
            <person name="Kimball H."/>
            <person name="Kobayashi A."/>
            <person name="Krawczyk M.-C."/>
            <person name="Leyba T."/>
            <person name="Longmire J.L."/>
            <person name="Lopez F."/>
            <person name="Lou Y."/>
            <person name="Lowry S."/>
            <person name="Ludeman T."/>
            <person name="Manohar C.F."/>
            <person name="Mark G.A."/>
            <person name="McMurray K.L."/>
            <person name="Meincke L.J."/>
            <person name="Morgan J."/>
            <person name="Moyzis R.K."/>
            <person name="Mundt M.O."/>
            <person name="Munk A.C."/>
            <person name="Nandkeshwar R.D."/>
            <person name="Pitluck S."/>
            <person name="Pollard M."/>
            <person name="Predki P."/>
            <person name="Parson-Quintana B."/>
            <person name="Ramirez L."/>
            <person name="Rash S."/>
            <person name="Retterer J."/>
            <person name="Ricke D.O."/>
            <person name="Robinson D.L."/>
            <person name="Rodriguez A."/>
            <person name="Salamov A."/>
            <person name="Saunders E.H."/>
            <person name="Scott D."/>
            <person name="Shough T."/>
            <person name="Stallings R.L."/>
            <person name="Stalvey M."/>
            <person name="Sutherland R.D."/>
            <person name="Tapia R."/>
            <person name="Tesmer J.G."/>
            <person name="Thayer N."/>
            <person name="Thompson L.S."/>
            <person name="Tice H."/>
            <person name="Torney D.C."/>
            <person name="Tran-Gyamfi M."/>
            <person name="Tsai M."/>
            <person name="Ulanovsky L.E."/>
            <person name="Ustaszewska A."/>
            <person name="Vo N."/>
            <person name="White P.S."/>
            <person name="Williams A.L."/>
            <person name="Wills P.L."/>
            <person name="Wu J.-R."/>
            <person name="Wu K."/>
            <person name="Yang J."/>
            <person name="DeJong P."/>
            <person name="Bruce D."/>
            <person name="Doggett N.A."/>
            <person name="Deaven L."/>
            <person name="Schmutz J."/>
            <person name="Grimwood J."/>
            <person name="Richardson P."/>
            <person name="Rokhsar D.S."/>
            <person name="Eichler E.E."/>
            <person name="Gilna P."/>
            <person name="Lucas S.M."/>
            <person name="Myers R.M."/>
            <person name="Rubin E.M."/>
            <person name="Pennacchio L.A."/>
        </authorList>
    </citation>
    <scope>NUCLEOTIDE SEQUENCE [LARGE SCALE GENOMIC DNA]</scope>
</reference>
<reference key="4">
    <citation type="submission" date="2005-09" db="EMBL/GenBank/DDBJ databases">
        <authorList>
            <person name="Mural R.J."/>
            <person name="Istrail S."/>
            <person name="Sutton G.G."/>
            <person name="Florea L."/>
            <person name="Halpern A.L."/>
            <person name="Mobarry C.M."/>
            <person name="Lippert R."/>
            <person name="Walenz B."/>
            <person name="Shatkay H."/>
            <person name="Dew I."/>
            <person name="Miller J.R."/>
            <person name="Flanigan M.J."/>
            <person name="Edwards N.J."/>
            <person name="Bolanos R."/>
            <person name="Fasulo D."/>
            <person name="Halldorsson B.V."/>
            <person name="Hannenhalli S."/>
            <person name="Turner R."/>
            <person name="Yooseph S."/>
            <person name="Lu F."/>
            <person name="Nusskern D.R."/>
            <person name="Shue B.C."/>
            <person name="Zheng X.H."/>
            <person name="Zhong F."/>
            <person name="Delcher A.L."/>
            <person name="Huson D.H."/>
            <person name="Kravitz S.A."/>
            <person name="Mouchard L."/>
            <person name="Reinert K."/>
            <person name="Remington K.A."/>
            <person name="Clark A.G."/>
            <person name="Waterman M.S."/>
            <person name="Eichler E.E."/>
            <person name="Adams M.D."/>
            <person name="Hunkapiller M.W."/>
            <person name="Myers E.W."/>
            <person name="Venter J.C."/>
        </authorList>
    </citation>
    <scope>NUCLEOTIDE SEQUENCE [LARGE SCALE GENOMIC DNA]</scope>
</reference>
<reference key="5">
    <citation type="journal article" date="2004" name="Genome Res.">
        <title>The status, quality, and expansion of the NIH full-length cDNA project: the Mammalian Gene Collection (MGC).</title>
        <authorList>
            <consortium name="The MGC Project Team"/>
        </authorList>
    </citation>
    <scope>NUCLEOTIDE SEQUENCE [LARGE SCALE MRNA] (ISOFORM 1)</scope>
    <source>
        <tissue>Testis</tissue>
    </source>
</reference>
<reference key="6">
    <citation type="journal article" date="1999" name="Cytogenet. Cell Genet.">
        <title>The human gene for the poly(A)-specific ribonuclease (PARN) maps to 16p13 and has a truncated copy in the Prader-Willi/Angelman syndrome region on 15q11--&gt;q13.</title>
        <authorList>
            <person name="Buiting K."/>
            <person name="Koerner C."/>
            <person name="Ulrich B."/>
            <person name="Wahle E."/>
            <person name="Horsthemke B."/>
        </authorList>
    </citation>
    <scope>TISSUE SPECIFICITY</scope>
</reference>
<reference key="7">
    <citation type="journal article" date="2000" name="J. Biol. Chem.">
        <title>A 54-kDa fragment of the Poly(A)-specific ribonuclease is an oligomeric, processive, and cap-interacting Poly(A)-specific 3' exonuclease.</title>
        <authorList>
            <person name="Martinez J."/>
            <person name="Ren Y.-G."/>
            <person name="Thuresson A.-C."/>
            <person name="Hellman U."/>
            <person name="Aastroem J."/>
            <person name="Virtanen A."/>
        </authorList>
    </citation>
    <scope>ENZYME ACTIVITY</scope>
    <scope>SUBUNIT</scope>
    <scope>IDENTIFICATION BY MASS SPECTROMETRY</scope>
</reference>
<reference key="8">
    <citation type="journal article" date="2000" name="Mol. Cell">
        <title>Interaction between a poly(A)-specific ribonuclease and the 5' cap influences mRNA deadenylation rates in vitro.</title>
        <authorList>
            <person name="Gao M."/>
            <person name="Fritz D.T."/>
            <person name="Ford L.P."/>
            <person name="Wilusz J."/>
        </authorList>
    </citation>
    <scope>FUNCTION</scope>
</reference>
<reference key="9">
    <citation type="journal article" date="2001" name="J. Biol. Chem.">
        <title>The mRNA cap structure stimulates rate of poly(A) removal and amplifies processivity of degradation.</title>
        <authorList>
            <person name="Martinez J."/>
            <person name="Ren Y.-G."/>
            <person name="Nilsson P."/>
            <person name="Ehrenberg M."/>
            <person name="Virtanen A."/>
        </authorList>
    </citation>
    <scope>FUNCTION</scope>
    <scope>COFACTOR</scope>
</reference>
<reference key="10">
    <citation type="journal article" date="2002" name="J. Biol. Chem.">
        <title>Identification of the active site of poly(A)-specific ribonuclease by site-directed mutagenesis and Fe(2+)-mediated cleavage.</title>
        <authorList>
            <person name="Ren Y.-G."/>
            <person name="Martinez J."/>
            <person name="Virtanen A."/>
        </authorList>
    </citation>
    <scope>MUTAGENESIS OF ASP-28; GLU-30; ASP-292 AND ASP-382</scope>
</reference>
<reference key="11">
    <citation type="journal article" date="2002" name="Mol. Biol. Cell">
        <title>Functional proteomic analysis of human nucleolus.</title>
        <authorList>
            <person name="Scherl A."/>
            <person name="Coute Y."/>
            <person name="Deon C."/>
            <person name="Calle A."/>
            <person name="Kindbeiter K."/>
            <person name="Sanchez J.-C."/>
            <person name="Greco A."/>
            <person name="Hochstrasser D.F."/>
            <person name="Diaz J.-J."/>
        </authorList>
    </citation>
    <scope>SUBCELLULAR LOCATION [LARGE SCALE ANALYSIS]</scope>
    <source>
        <tissue>Cervix carcinoma</tissue>
    </source>
</reference>
<reference key="12">
    <citation type="journal article" date="2003" name="Mol. Cell">
        <title>Nonsense-mediated mRNA decay in mammalian cells involves decapping, deadenylating, and exonucleolytic activities.</title>
        <authorList>
            <person name="Lejeune F."/>
            <person name="Li X."/>
            <person name="Maquat L.E."/>
        </authorList>
    </citation>
    <scope>IDENTIFICATION IN A MRNA DECAY COMPLEX WITH RENT1; RENT2 AND RENT3B</scope>
</reference>
<reference key="13">
    <citation type="journal article" date="2003" name="Mol. Cell. Biol.">
        <title>Tristetraprolin and its family members can promote the cell-free deadenylation of AU-rich element-containing mRNAs by poly(A) ribonuclease.</title>
        <authorList>
            <person name="Lai W.S."/>
            <person name="Kennington E.A."/>
            <person name="Blackshear P.J."/>
        </authorList>
    </citation>
    <scope>FUNCTION</scope>
    <scope>MUTAGENESIS OF ASP-28; GLU-30 AND ASP-382</scope>
</reference>
<reference key="14">
    <citation type="journal article" date="2004" name="Mol. Cell">
        <title>Facilitation of mRNA deadenylation and decay by the exosome-bound, DExH protein RHAU.</title>
        <authorList>
            <person name="Tran H."/>
            <person name="Schilling M."/>
            <person name="Wirbelauer C."/>
            <person name="Hess D."/>
            <person name="Nagamine Y."/>
        </authorList>
    </citation>
    <scope>INTERACTION WITH DHX36</scope>
</reference>
<reference key="15">
    <citation type="journal article" date="2004" name="Mol. Cell">
        <title>A KH domain RNA binding protein, KSRP, promotes ARE-directed mRNA turnover by recruiting the degradation machinery.</title>
        <authorList>
            <person name="Gherzi R."/>
            <person name="Lee K.-Y."/>
            <person name="Briata P."/>
            <person name="Wegmueller D."/>
            <person name="Moroni C."/>
            <person name="Karin M."/>
            <person name="Chen C.-Y."/>
        </authorList>
    </citation>
    <scope>FUNCTION</scope>
    <scope>INTERACTION WITH KHSRP</scope>
</reference>
<reference key="16">
    <citation type="journal article" date="2004" name="J. Biol. Chem.">
        <title>Coordination of divalent metal ions in the active site of poly(A)-specific ribonuclease.</title>
        <authorList>
            <person name="Ren Y.-G."/>
            <person name="Kirsebom L.A."/>
            <person name="Virtanen A."/>
        </authorList>
    </citation>
    <scope>COFACTOR</scope>
    <scope>MUTAGENESIS OF ASP-28; GLU-30; ASP-292 AND ASP-382</scope>
</reference>
<reference key="17">
    <citation type="journal article" date="2006" name="Nat. Biotechnol.">
        <title>A probability-based approach for high-throughput protein phosphorylation analysis and site localization.</title>
        <authorList>
            <person name="Beausoleil S.A."/>
            <person name="Villen J."/>
            <person name="Gerber S.A."/>
            <person name="Rush J."/>
            <person name="Gygi S.P."/>
        </authorList>
    </citation>
    <scope>PHOSPHORYLATION [LARGE SCALE ANALYSIS] AT SER-163 AND SER-557</scope>
    <scope>IDENTIFICATION BY MASS SPECTROMETRY [LARGE SCALE ANALYSIS]</scope>
    <source>
        <tissue>Cervix carcinoma</tissue>
    </source>
</reference>
<reference key="18">
    <citation type="journal article" date="2006" name="RNA">
        <title>CUG-BP binds to RNA substrates and recruits PARN deadenylase.</title>
        <authorList>
            <person name="Moraes K.C."/>
            <person name="Wilusz C.J."/>
            <person name="Wilusz J."/>
        </authorList>
    </citation>
    <scope>INTERACTION WITH CELF1</scope>
</reference>
<reference key="19">
    <citation type="journal article" date="2008" name="Proc. Natl. Acad. Sci. U.S.A.">
        <title>A quantitative atlas of mitotic phosphorylation.</title>
        <authorList>
            <person name="Dephoure N."/>
            <person name="Zhou C."/>
            <person name="Villen J."/>
            <person name="Beausoleil S.A."/>
            <person name="Bakalarski C.E."/>
            <person name="Elledge S.J."/>
            <person name="Gygi S.P."/>
        </authorList>
    </citation>
    <scope>PHOSPHORYLATION [LARGE SCALE ANALYSIS] AT SER-557</scope>
    <scope>IDENTIFICATION BY MASS SPECTROMETRY [LARGE SCALE ANALYSIS]</scope>
    <source>
        <tissue>Cervix carcinoma</tissue>
    </source>
</reference>
<reference key="20">
    <citation type="journal article" date="2009" name="Anal. Chem.">
        <title>Lys-N and trypsin cover complementary parts of the phosphoproteome in a refined SCX-based approach.</title>
        <authorList>
            <person name="Gauci S."/>
            <person name="Helbig A.O."/>
            <person name="Slijper M."/>
            <person name="Krijgsveld J."/>
            <person name="Heck A.J."/>
            <person name="Mohammed S."/>
        </authorList>
    </citation>
    <scope>IDENTIFICATION BY MASS SPECTROMETRY [LARGE SCALE ANALYSIS]</scope>
</reference>
<reference key="21">
    <citation type="journal article" date="2009" name="Sci. Signal.">
        <title>Quantitative phosphoproteomic analysis of T cell receptor signaling reveals system-wide modulation of protein-protein interactions.</title>
        <authorList>
            <person name="Mayya V."/>
            <person name="Lundgren D.H."/>
            <person name="Hwang S.-I."/>
            <person name="Rezaul K."/>
            <person name="Wu L."/>
            <person name="Eng J.K."/>
            <person name="Rodionov V."/>
            <person name="Han D.K."/>
        </authorList>
    </citation>
    <scope>PHOSPHORYLATION [LARGE SCALE ANALYSIS] AT SER-163</scope>
    <scope>IDENTIFICATION BY MASS SPECTROMETRY [LARGE SCALE ANALYSIS]</scope>
    <source>
        <tissue>Leukemic T-cell</tissue>
    </source>
</reference>
<reference key="22">
    <citation type="journal article" date="2009" name="Science">
        <title>Lysine acetylation targets protein complexes and co-regulates major cellular functions.</title>
        <authorList>
            <person name="Choudhary C."/>
            <person name="Kumar C."/>
            <person name="Gnad F."/>
            <person name="Nielsen M.L."/>
            <person name="Rehman M."/>
            <person name="Walther T.C."/>
            <person name="Olsen J.V."/>
            <person name="Mann M."/>
        </authorList>
    </citation>
    <scope>ACETYLATION [LARGE SCALE ANALYSIS] AT LYS-220 AND LYS-499</scope>
    <scope>IDENTIFICATION BY MASS SPECTROMETRY [LARGE SCALE ANALYSIS]</scope>
</reference>
<reference key="23">
    <citation type="journal article" date="2010" name="Mol. Cell">
        <title>DNA damage activates a spatially distinct late cytoplasmic cell-cycle checkpoint network controlled by MK2-mediated RNA stabilization.</title>
        <authorList>
            <person name="Reinhardt H.C."/>
            <person name="Hasskamp P."/>
            <person name="Schmedding I."/>
            <person name="Morandell S."/>
            <person name="van Vugt M.A."/>
            <person name="Wang X."/>
            <person name="Linding R."/>
            <person name="Ong S.E."/>
            <person name="Weaver D."/>
            <person name="Carr S.A."/>
            <person name="Yaffe M.B."/>
        </authorList>
    </citation>
    <scope>PHOSPHORYLATION AT SER-557 BY MAPKAPK2</scope>
    <scope>PHOSPHORYLATION AT SER-557</scope>
</reference>
<reference key="24">
    <citation type="journal article" date="2010" name="Sci. Signal.">
        <title>Quantitative phosphoproteomics reveals widespread full phosphorylation site occupancy during mitosis.</title>
        <authorList>
            <person name="Olsen J.V."/>
            <person name="Vermeulen M."/>
            <person name="Santamaria A."/>
            <person name="Kumar C."/>
            <person name="Miller M.L."/>
            <person name="Jensen L.J."/>
            <person name="Gnad F."/>
            <person name="Cox J."/>
            <person name="Jensen T.S."/>
            <person name="Nigg E.A."/>
            <person name="Brunak S."/>
            <person name="Mann M."/>
        </authorList>
    </citation>
    <scope>PHOSPHORYLATION [LARGE SCALE ANALYSIS] AT SER-557; SER-619; SER-628 AND THR-631</scope>
    <scope>IDENTIFICATION BY MASS SPECTROMETRY [LARGE SCALE ANALYSIS]</scope>
    <source>
        <tissue>Cervix carcinoma</tissue>
    </source>
</reference>
<reference key="25">
    <citation type="journal article" date="2011" name="BMC Syst. Biol.">
        <title>Initial characterization of the human central proteome.</title>
        <authorList>
            <person name="Burkard T.R."/>
            <person name="Planyavsky M."/>
            <person name="Kaupe I."/>
            <person name="Breitwieser F.P."/>
            <person name="Buerckstuemmer T."/>
            <person name="Bennett K.L."/>
            <person name="Superti-Furga G."/>
            <person name="Colinge J."/>
        </authorList>
    </citation>
    <scope>IDENTIFICATION BY MASS SPECTROMETRY [LARGE SCALE ANALYSIS]</scope>
</reference>
<reference key="26">
    <citation type="journal article" date="2011" name="Proc. Natl. Acad. Sci. U.S.A.">
        <title>Zinc-finger antiviral protein inhibits HIV-1 infection by selectively targeting multiply spliced viral mRNAs for degradation.</title>
        <authorList>
            <person name="Zhu Y."/>
            <person name="Chen G."/>
            <person name="Lv F."/>
            <person name="Wang X."/>
            <person name="Ji X."/>
            <person name="Xu Y."/>
            <person name="Sun J."/>
            <person name="Wu L."/>
            <person name="Zheng Y.T."/>
            <person name="Gao G."/>
        </authorList>
    </citation>
    <scope>INTERACTION WITH ZC3HAV1</scope>
</reference>
<reference key="27">
    <citation type="journal article" date="2011" name="Sci. Signal.">
        <title>System-wide temporal characterization of the proteome and phosphoproteome of human embryonic stem cell differentiation.</title>
        <authorList>
            <person name="Rigbolt K.T."/>
            <person name="Prokhorova T.A."/>
            <person name="Akimov V."/>
            <person name="Henningsen J."/>
            <person name="Johansen P.T."/>
            <person name="Kratchmarova I."/>
            <person name="Kassem M."/>
            <person name="Mann M."/>
            <person name="Olsen J.V."/>
            <person name="Blagoev B."/>
        </authorList>
    </citation>
    <scope>PHOSPHORYLATION [LARGE SCALE ANALYSIS] AT SER-557; SER-619 AND SER-623</scope>
    <scope>IDENTIFICATION BY MASS SPECTROMETRY [LARGE SCALE ANALYSIS]</scope>
</reference>
<reference key="28">
    <citation type="journal article" date="2012" name="RNA">
        <title>Maturation of mammalian H/ACA box snoRNAs: PAPD5-dependent adenylation and PARN-dependent trimming.</title>
        <authorList>
            <person name="Berndt H."/>
            <person name="Harnisch C."/>
            <person name="Rammelt C."/>
            <person name="Stoehr N."/>
            <person name="Zirkel A."/>
            <person name="Dohm J.C."/>
            <person name="Himmelbauer H."/>
            <person name="Tavanez J.P."/>
            <person name="Huettelmaier S."/>
            <person name="Wahle E."/>
        </authorList>
    </citation>
    <scope>FUNCTION</scope>
    <scope>SUBCELLULAR LOCATION</scope>
</reference>
<reference key="29">
    <citation type="journal article" date="2013" name="J. Proteome Res.">
        <title>Toward a comprehensive characterization of a human cancer cell phosphoproteome.</title>
        <authorList>
            <person name="Zhou H."/>
            <person name="Di Palma S."/>
            <person name="Preisinger C."/>
            <person name="Peng M."/>
            <person name="Polat A.N."/>
            <person name="Heck A.J."/>
            <person name="Mohammed S."/>
        </authorList>
    </citation>
    <scope>PHOSPHORYLATION [LARGE SCALE ANALYSIS] AT SER-163; SER-167; SER-530; SER-557; SER-619 AND SER-623</scope>
    <scope>IDENTIFICATION BY MASS SPECTROMETRY [LARGE SCALE ANALYSIS]</scope>
    <source>
        <tissue>Cervix carcinoma</tissue>
        <tissue>Erythroleukemia</tissue>
    </source>
</reference>
<reference key="30">
    <citation type="journal article" date="2014" name="J. Proteomics">
        <title>An enzyme assisted RP-RPLC approach for in-depth analysis of human liver phosphoproteome.</title>
        <authorList>
            <person name="Bian Y."/>
            <person name="Song C."/>
            <person name="Cheng K."/>
            <person name="Dong M."/>
            <person name="Wang F."/>
            <person name="Huang J."/>
            <person name="Sun D."/>
            <person name="Wang L."/>
            <person name="Ye M."/>
            <person name="Zou H."/>
        </authorList>
    </citation>
    <scope>PHOSPHORYLATION [LARGE SCALE ANALYSIS] AT SER-557</scope>
    <scope>IDENTIFICATION BY MASS SPECTROMETRY [LARGE SCALE ANALYSIS]</scope>
    <source>
        <tissue>Liver</tissue>
    </source>
</reference>
<reference key="31">
    <citation type="journal article" date="2014" name="Proc. Natl. Acad. Sci. U.S.A.">
        <title>PAPD5-mediated 3' adenylation and subsequent degradation of miR-21 is disrupted in proliferative disease.</title>
        <authorList>
            <person name="Boele J."/>
            <person name="Persson H."/>
            <person name="Shin J.W."/>
            <person name="Ishizu Y."/>
            <person name="Newie I.S."/>
            <person name="Soekilde R."/>
            <person name="Hawkins S.M."/>
            <person name="Coarfa C."/>
            <person name="Ikeda K."/>
            <person name="Takayama K."/>
            <person name="Horie-Inoue K."/>
            <person name="Ando Y."/>
            <person name="Burroughs A.M."/>
            <person name="Sasaki C."/>
            <person name="Suzuki C."/>
            <person name="Sakai M."/>
            <person name="Aoki S."/>
            <person name="Ogawa A."/>
            <person name="Hasegawa A."/>
            <person name="Lizio M."/>
            <person name="Kaida K."/>
            <person name="Teusink B."/>
            <person name="Carninci P."/>
            <person name="Suzuki H."/>
            <person name="Inoue S."/>
            <person name="Gunaratne P.H."/>
            <person name="Rovira C."/>
            <person name="Hayashizaki Y."/>
            <person name="de Hoon M.J."/>
        </authorList>
    </citation>
    <scope>FUNCTION</scope>
</reference>
<reference key="32">
    <citation type="journal article" date="2015" name="J. Clin. Invest.">
        <title>Poly(A)-specific ribonuclease deficiency impacts telomere biology and causes dyskeratosis congenita.</title>
        <authorList>
            <person name="Tummala H."/>
            <person name="Walne A."/>
            <person name="Collopy L."/>
            <person name="Cardoso S."/>
            <person name="de la Fuente J."/>
            <person name="Lawson S."/>
            <person name="Powell J."/>
            <person name="Cooper N."/>
            <person name="Foster A."/>
            <person name="Mohammed S."/>
            <person name="Plagnol V."/>
            <person name="Vulliamy T."/>
            <person name="Dokal I."/>
        </authorList>
    </citation>
    <scope>INVOLVEMENT IN DKCB6</scope>
    <scope>VARIANT DKCB6 VAL-383</scope>
</reference>
<reference key="33">
    <citation type="journal article" date="2015" name="Nat. Genet.">
        <title>Exome sequencing links mutations in PARN and RTEL1 with familial pulmonary fibrosis and telomere shortening.</title>
        <authorList>
            <person name="Stuart B.D."/>
            <person name="Choi J."/>
            <person name="Zaidi S."/>
            <person name="Xing C."/>
            <person name="Holohan B."/>
            <person name="Chen R."/>
            <person name="Choi M."/>
            <person name="Dharwadkar P."/>
            <person name="Torres F."/>
            <person name="Girod C.E."/>
            <person name="Weissler J."/>
            <person name="Fitzgerald J."/>
            <person name="Kershaw C."/>
            <person name="Klesney-Tait J."/>
            <person name="Mageto Y."/>
            <person name="Shay J.W."/>
            <person name="Ji W."/>
            <person name="Bilguvar K."/>
            <person name="Mane S."/>
            <person name="Lifton R.P."/>
            <person name="Garcia C.K."/>
        </authorList>
    </citation>
    <scope>INVOLVEMENT IN PFBMFT4</scope>
    <scope>VARIANT PFBMFT4 ARG-421</scope>
</reference>
<reference key="34">
    <citation type="journal article" date="2005" name="EMBO J.">
        <title>Structural insight into poly(A) binding and catalytic mechanism of human PARN.</title>
        <authorList>
            <person name="Wu M."/>
            <person name="Reuter M."/>
            <person name="Lilie H."/>
            <person name="Liu Y."/>
            <person name="Wahle E."/>
            <person name="Song H."/>
        </authorList>
    </citation>
    <scope>X-RAY CRYSTALLOGRAPHY (2.6 ANGSTROMS) OF 1-430 IN COMPLEX WITH DNA</scope>
    <scope>MUTAGENESIS OF PHE-31; ILE-34; ILE-113; PHE-123 AND HIS-377</scope>
    <scope>SUBUNIT</scope>
</reference>
<sequence length="639" mass="73451">MEIIRSNFKSNLHKVYQAIEEADFFAIDGEFSGISDGPSVSALTNGFDTPEERYQKLKKHSMDFLLFQFGLCTFKYDYTDSKYITKSFNFYVFPKPFNRSSPDVKFVCQSSSIDFLASQGFDFNKVFRNGIPYLNQEEERQLREQYDEKRSQANGAGALSYVSPNTSKCPVTIPEDQKKFIDQVVEKIEDLLQSEENKNLDLEPCTGFQRKLIYQTLSWKYPKGIHVETLETEKKERYIVISKVDEEERKRREQQKHAKEQEELNDAVGFSRVIHAIANSGKLVIGHNMLLDVMHTVHQFYCPLPADLSEFKEMTTCVFPRLLDTKLMASTQPFKDIINNTSLAELEKRLKETPFNPPKVESAEGFPSYDTASEQLHEAGYDAYITGLCFISMANYLGSFLSPPKIHVSARSKLIEPFFNKLFLMRVMDIPYLNLEGPDLQPKRDHVLHVTFPKEWKTSDLYQLFSAFGNIQISWIDDTSAFVSLSQPEQVKIAVNTSKYAESYRIQTYAEYMGRKQEEKQIKRKWTEDSWKEADSKRLNPQCIPYTLQNHYYRNNSFTAPSTVGKRNLSPSQEEAGLEDGVSGEISDTELEQTDSCAEPLSEGRKKAKKLKRMKKELSPAGSISKNSPATLFEVPDTW</sequence>
<comment type="function">
    <text evidence="6 7 10 13 19 20 23">3'-exoribonuclease that has a preference for poly(A) tails of mRNAs, thereby efficiently degrading poly(A) tails. Exonucleolytic degradation of the poly(A) tail is often the first step in the decay of eukaryotic mRNAs and is also used to silence certain maternal mRNAs translationally during oocyte maturation and early embryonic development. Interacts with both the 3'-end poly(A) tail and the 5'-end cap structure during degradation, the interaction with the cap structure being required for an efficient degradation of poly(A) tails. Involved in nonsense-mediated mRNA decay, a critical process of selective degradation of mRNAs that contain premature stop codons. Also involved in degradation of inherently unstable mRNAs that contain AU-rich elements (AREs) in their 3'-UTR, possibly via its interaction with KHSRP. Probably mediates the removal of poly(A) tails of AREs mRNAs, which constitutes the first step of destabilization (PubMed:10882133, PubMed:11359775, PubMed:12748283, PubMed:15175153, PubMed:9736620). Also able to recognize and trim poly(A) tails of microRNAs such as MIR21 and H/ACA box snoRNAs (small nucleolar RNAs) leading to microRNAs degradation or snoRNA increased stability (PubMed:22442037, PubMed:25049417).</text>
</comment>
<comment type="catalytic activity">
    <reaction evidence="5 23">
        <text>Exonucleolytic cleavage of poly(A) to 5'-AMP.</text>
        <dbReference type="EC" id="3.1.13.4"/>
    </reaction>
</comment>
<comment type="cofactor">
    <cofactor evidence="7 14">
        <name>Mg(2+)</name>
        <dbReference type="ChEBI" id="CHEBI:18420"/>
    </cofactor>
    <text evidence="7 14">Divalent metal cations. Mg(2+) is the most probable.</text>
</comment>
<comment type="subunit">
    <text evidence="5 11 12 13 15 16 18">Homodimer (PubMed:10801819, PubMed:16281054). Found in a mRNA decay complex with RENT1, RENT2 and RENT3B (PubMed:14527413). Interacts with KHSRP (PubMed:15175153). Interacts with CELF1/CUGBP1 (PubMed:16601207). Interacts with ZC3HAV1 in an RNA-independent manner (PubMed:21876179). Interacts with DHX36 (PubMed:14731398).</text>
</comment>
<comment type="interaction">
    <interactant intactId="EBI-372832">
        <id>O95453</id>
    </interactant>
    <interactant intactId="EBI-473181">
        <id>Q99728</id>
        <label>BARD1</label>
    </interactant>
    <organismsDiffer>false</organismsDiffer>
    <experiments>4</experiments>
</comment>
<comment type="interaction">
    <interactant intactId="EBI-372832">
        <id>O95453</id>
    </interactant>
    <interactant intactId="EBI-711360">
        <id>P33240</id>
        <label>CSTF2</label>
    </interactant>
    <organismsDiffer>false</organismsDiffer>
    <experiments>5</experiments>
</comment>
<comment type="interaction">
    <interactant intactId="EBI-372832">
        <id>O95453</id>
    </interactant>
    <interactant intactId="EBI-464743">
        <id>Q09161</id>
        <label>NCBP1</label>
    </interactant>
    <organismsDiffer>false</organismsDiffer>
    <experiments>2</experiments>
</comment>
<comment type="subcellular location">
    <subcellularLocation>
        <location evidence="23">Nucleus</location>
    </subcellularLocation>
    <subcellularLocation>
        <location evidence="23">Cytoplasm</location>
    </subcellularLocation>
    <subcellularLocation>
        <location evidence="9 19">Nucleus</location>
        <location evidence="9 19">Nucleolus</location>
    </subcellularLocation>
    <text>Some nuclear fraction is nucleolar.</text>
</comment>
<comment type="alternative products">
    <event type="alternative splicing"/>
    <isoform>
        <id>O95453-1</id>
        <name>1</name>
        <sequence type="displayed"/>
    </isoform>
    <isoform>
        <id>O95453-2</id>
        <name>2</name>
        <sequence type="described" ref="VSP_042846"/>
    </isoform>
    <isoform>
        <id>O95453-3</id>
        <name>3</name>
        <sequence type="described" ref="VSP_042847"/>
    </isoform>
    <isoform>
        <id>O95453-4</id>
        <name>4</name>
        <sequence type="described" ref="VSP_057269"/>
    </isoform>
</comment>
<comment type="tissue specificity">
    <text evidence="4 23">Ubiquitous.</text>
</comment>
<comment type="PTM">
    <text evidence="17">Phosphorylation by MAPKAPK2, preventing GADD45A mRNA degradation after genotoxic stress.</text>
</comment>
<comment type="disease" evidence="22">
    <disease id="DI-04424">
        <name>Dyskeratosis congenita, autosomal recessive, 6</name>
        <acronym>DKCB6</acronym>
        <description>A form of dyskeratosis congenita, a rare multisystem disorder caused by defective telomere maintenance. It is characterized by progressive bone marrow failure, and the clinical triad of reticulated skin hyperpigmentation, nail dystrophy, and mucosal leukoplakia. Common but variable features include premature graying, aplastic anemia, low platelets, osteoporosis, pulmonary fibrosis, and liver fibrosis among others. Early mortality is often associated with bone marrow failure, infections, fatal pulmonary complications, or malignancy.</description>
        <dbReference type="MIM" id="616353"/>
    </disease>
    <text>The disease is caused by variants affecting the gene represented in this entry.</text>
</comment>
<comment type="disease" evidence="21">
    <disease id="DI-04430">
        <name>Pulmonary fibrosis, and/or bone marrow failure syndrome, telomere-related, 4</name>
        <acronym>PFBMFT4</acronym>
        <description>An autosomal dominant disease associated with shortened telomeres. Pulmonary fibrosis is the most common manifestation. Other manifestations include aplastic anemia due to bone marrow failure, hepatic fibrosis, and increased cancer risk, particularly myelodysplastic syndrome and acute myeloid leukemia. Phenotype, age at onset, and severity are determined by telomere length.</description>
        <dbReference type="MIM" id="616371"/>
    </disease>
    <text>The disease is caused by variants affecting the gene represented in this entry.</text>
</comment>
<comment type="miscellaneous">
    <molecule>Isoform 2</molecule>
    <text evidence="25">Non canonical splice junctions.</text>
</comment>
<comment type="similarity">
    <text evidence="25">Belongs to the CAF1 family.</text>
</comment>
<dbReference type="EC" id="3.1.13.4"/>
<dbReference type="EMBL" id="AJ005698">
    <property type="protein sequence ID" value="CAA06683.1"/>
    <property type="molecule type" value="mRNA"/>
</dbReference>
<dbReference type="EMBL" id="AK293189">
    <property type="protein sequence ID" value="BAG56729.1"/>
    <property type="molecule type" value="mRNA"/>
</dbReference>
<dbReference type="EMBL" id="AK299653">
    <property type="protein sequence ID" value="BAG61572.1"/>
    <property type="molecule type" value="mRNA"/>
</dbReference>
<dbReference type="EMBL" id="AK301648">
    <property type="protein sequence ID" value="BAG63126.1"/>
    <property type="molecule type" value="mRNA"/>
</dbReference>
<dbReference type="EMBL" id="AK315020">
    <property type="protein sequence ID" value="BAG37510.1"/>
    <property type="molecule type" value="mRNA"/>
</dbReference>
<dbReference type="EMBL" id="AC009167">
    <property type="status" value="NOT_ANNOTATED_CDS"/>
    <property type="molecule type" value="Genomic_DNA"/>
</dbReference>
<dbReference type="EMBL" id="AC092291">
    <property type="status" value="NOT_ANNOTATED_CDS"/>
    <property type="molecule type" value="Genomic_DNA"/>
</dbReference>
<dbReference type="EMBL" id="KF456163">
    <property type="status" value="NOT_ANNOTATED_CDS"/>
    <property type="molecule type" value="Genomic_DNA"/>
</dbReference>
<dbReference type="EMBL" id="CH471112">
    <property type="protein sequence ID" value="EAW85110.1"/>
    <property type="molecule type" value="Genomic_DNA"/>
</dbReference>
<dbReference type="EMBL" id="BC050029">
    <property type="protein sequence ID" value="AAH50029.1"/>
    <property type="molecule type" value="mRNA"/>
</dbReference>
<dbReference type="CCDS" id="CCDS45419.1">
    <molecule id="O95453-1"/>
</dbReference>
<dbReference type="CCDS" id="CCDS45420.1">
    <molecule id="O95453-2"/>
</dbReference>
<dbReference type="CCDS" id="CCDS58425.1">
    <molecule id="O95453-3"/>
</dbReference>
<dbReference type="RefSeq" id="NP_001127949.1">
    <molecule id="O95453-2"/>
    <property type="nucleotide sequence ID" value="NM_001134477.3"/>
</dbReference>
<dbReference type="RefSeq" id="NP_001229921.1">
    <molecule id="O95453-3"/>
    <property type="nucleotide sequence ID" value="NM_001242992.2"/>
</dbReference>
<dbReference type="RefSeq" id="NP_002573.1">
    <molecule id="O95453-1"/>
    <property type="nucleotide sequence ID" value="NM_002582.4"/>
</dbReference>
<dbReference type="PDB" id="2A1R">
    <property type="method" value="X-ray"/>
    <property type="resolution" value="2.60 A"/>
    <property type="chains" value="A/B=1-430"/>
</dbReference>
<dbReference type="PDB" id="2A1S">
    <property type="method" value="X-ray"/>
    <property type="resolution" value="2.60 A"/>
    <property type="chains" value="A/B/C/D=1-430"/>
</dbReference>
<dbReference type="PDB" id="3CTR">
    <property type="method" value="X-ray"/>
    <property type="resolution" value="2.10 A"/>
    <property type="chains" value="A=445-540"/>
</dbReference>
<dbReference type="PDBsum" id="2A1R"/>
<dbReference type="PDBsum" id="2A1S"/>
<dbReference type="PDBsum" id="3CTR"/>
<dbReference type="SMR" id="O95453"/>
<dbReference type="BioGRID" id="111107">
    <property type="interactions" value="160"/>
</dbReference>
<dbReference type="CORUM" id="O95453"/>
<dbReference type="DIP" id="DIP-31124N"/>
<dbReference type="FunCoup" id="O95453">
    <property type="interactions" value="4118"/>
</dbReference>
<dbReference type="IntAct" id="O95453">
    <property type="interactions" value="70"/>
</dbReference>
<dbReference type="MINT" id="O95453"/>
<dbReference type="STRING" id="9606.ENSP00000387911"/>
<dbReference type="BindingDB" id="O95453"/>
<dbReference type="ChEMBL" id="CHEMBL3616362"/>
<dbReference type="GlyGen" id="O95453">
    <property type="glycosylation" value="4 sites, 2 N-linked glycans (3 sites), 1 O-linked glycan (1 site)"/>
</dbReference>
<dbReference type="iPTMnet" id="O95453"/>
<dbReference type="PhosphoSitePlus" id="O95453"/>
<dbReference type="SwissPalm" id="O95453"/>
<dbReference type="BioMuta" id="PARN"/>
<dbReference type="jPOST" id="O95453"/>
<dbReference type="MassIVE" id="O95453"/>
<dbReference type="PaxDb" id="9606-ENSP00000387911"/>
<dbReference type="PeptideAtlas" id="O95453"/>
<dbReference type="ProteomicsDB" id="5011"/>
<dbReference type="ProteomicsDB" id="50886">
    <molecule id="O95453-1"/>
</dbReference>
<dbReference type="ProteomicsDB" id="50887">
    <molecule id="O95453-2"/>
</dbReference>
<dbReference type="ProteomicsDB" id="50888">
    <molecule id="O95453-3"/>
</dbReference>
<dbReference type="Pumba" id="O95453"/>
<dbReference type="Antibodypedia" id="1739">
    <property type="antibodies" value="433 antibodies from 28 providers"/>
</dbReference>
<dbReference type="DNASU" id="2987"/>
<dbReference type="DNASU" id="5073"/>
<dbReference type="Ensembl" id="ENST00000341484.11">
    <molecule id="O95453-2"/>
    <property type="protein sequence ID" value="ENSP00000345456.7"/>
    <property type="gene ID" value="ENSG00000140694.18"/>
</dbReference>
<dbReference type="Ensembl" id="ENST00000420015.6">
    <molecule id="O95453-3"/>
    <property type="protein sequence ID" value="ENSP00000410525.2"/>
    <property type="gene ID" value="ENSG00000140694.18"/>
</dbReference>
<dbReference type="Ensembl" id="ENST00000437198.7">
    <molecule id="O95453-1"/>
    <property type="protein sequence ID" value="ENSP00000387911.2"/>
    <property type="gene ID" value="ENSG00000140694.18"/>
</dbReference>
<dbReference type="Ensembl" id="ENST00000539279.5">
    <molecule id="O95453-4"/>
    <property type="protein sequence ID" value="ENSP00000444381.1"/>
    <property type="gene ID" value="ENSG00000140694.18"/>
</dbReference>
<dbReference type="Ensembl" id="ENST00000615183.4">
    <molecule id="O95453-1"/>
    <property type="protein sequence ID" value="ENSP00000478668.1"/>
    <property type="gene ID" value="ENSG00000274829.4"/>
</dbReference>
<dbReference type="Ensembl" id="ENST00000618929.2">
    <molecule id="O95453-3"/>
    <property type="protein sequence ID" value="ENSP00000484279.1"/>
    <property type="gene ID" value="ENSG00000274829.4"/>
</dbReference>
<dbReference type="Ensembl" id="ENST00000631868.1">
    <molecule id="O95453-4"/>
    <property type="protein sequence ID" value="ENSP00000488554.1"/>
    <property type="gene ID" value="ENSG00000274829.4"/>
</dbReference>
<dbReference type="Ensembl" id="ENST00000634004.1">
    <molecule id="O95453-2"/>
    <property type="protein sequence ID" value="ENSP00000487634.1"/>
    <property type="gene ID" value="ENSG00000274829.4"/>
</dbReference>
<dbReference type="GeneID" id="5073"/>
<dbReference type="KEGG" id="hsa:5073"/>
<dbReference type="MANE-Select" id="ENST00000437198.7">
    <property type="protein sequence ID" value="ENSP00000387911.2"/>
    <property type="RefSeq nucleotide sequence ID" value="NM_002582.4"/>
    <property type="RefSeq protein sequence ID" value="NP_002573.1"/>
</dbReference>
<dbReference type="UCSC" id="uc010uzc.3">
    <molecule id="O95453-1"/>
    <property type="organism name" value="human"/>
</dbReference>
<dbReference type="AGR" id="HGNC:8609"/>
<dbReference type="CTD" id="5073"/>
<dbReference type="DisGeNET" id="5073"/>
<dbReference type="GeneCards" id="PARN"/>
<dbReference type="GeneReviews" id="PARN"/>
<dbReference type="HGNC" id="HGNC:8609">
    <property type="gene designation" value="PARN"/>
</dbReference>
<dbReference type="HPA" id="ENSG00000140694">
    <property type="expression patterns" value="Low tissue specificity"/>
</dbReference>
<dbReference type="MalaCards" id="PARN"/>
<dbReference type="MIM" id="604212">
    <property type="type" value="gene"/>
</dbReference>
<dbReference type="MIM" id="616353">
    <property type="type" value="phenotype"/>
</dbReference>
<dbReference type="MIM" id="616371">
    <property type="type" value="phenotype"/>
</dbReference>
<dbReference type="neXtProt" id="NX_O95453"/>
<dbReference type="OpenTargets" id="ENSG00000140694"/>
<dbReference type="Orphanet" id="1775">
    <property type="disease" value="Dyskeratosis congenita"/>
</dbReference>
<dbReference type="Orphanet" id="3322">
    <property type="disease" value="Hoyeraal-Hreidarsson syndrome"/>
</dbReference>
<dbReference type="Orphanet" id="2032">
    <property type="disease" value="Idiopathic pulmonary fibrosis"/>
</dbReference>
<dbReference type="PharmGKB" id="PA29072"/>
<dbReference type="PharmGKB" id="PA32949"/>
<dbReference type="VEuPathDB" id="HostDB:ENSG00000140694"/>
<dbReference type="eggNOG" id="KOG1990">
    <property type="taxonomic scope" value="Eukaryota"/>
</dbReference>
<dbReference type="GeneTree" id="ENSGT00940000153167"/>
<dbReference type="HOGENOM" id="CLU_018030_1_1_1"/>
<dbReference type="InParanoid" id="O95453"/>
<dbReference type="OrthoDB" id="1432093at2759"/>
<dbReference type="PAN-GO" id="O95453">
    <property type="GO annotations" value="4 GO annotations based on evolutionary models"/>
</dbReference>
<dbReference type="PhylomeDB" id="O95453"/>
<dbReference type="TreeFam" id="TF314502"/>
<dbReference type="PathwayCommons" id="O95453"/>
<dbReference type="Reactome" id="R-HSA-380994">
    <property type="pathway name" value="ATF4 activates genes in response to endoplasmic reticulum stress"/>
</dbReference>
<dbReference type="Reactome" id="R-HSA-429947">
    <property type="pathway name" value="Deadenylation of mRNA"/>
</dbReference>
<dbReference type="Reactome" id="R-HSA-450604">
    <property type="pathway name" value="KSRP (KHSRP) binds and destabilizes mRNA"/>
</dbReference>
<dbReference type="SignaLink" id="O95453"/>
<dbReference type="SIGNOR" id="O95453"/>
<dbReference type="BioGRID-ORCS" id="5073">
    <property type="hits" value="179 hits in 1158 CRISPR screens"/>
</dbReference>
<dbReference type="CD-CODE" id="6F24707C">
    <property type="entry name" value="Cajal body"/>
</dbReference>
<dbReference type="CD-CODE" id="91857CE7">
    <property type="entry name" value="Nucleolus"/>
</dbReference>
<dbReference type="CD-CODE" id="DEE660B4">
    <property type="entry name" value="Stress granule"/>
</dbReference>
<dbReference type="ChiTaRS" id="PARN">
    <property type="organism name" value="human"/>
</dbReference>
<dbReference type="EvolutionaryTrace" id="O95453"/>
<dbReference type="GeneWiki" id="PARN"/>
<dbReference type="GeneWiki" id="Poly(A)-specific_ribonuclease"/>
<dbReference type="GenomeRNAi" id="5073"/>
<dbReference type="Pharos" id="O95453">
    <property type="development level" value="Tbio"/>
</dbReference>
<dbReference type="PRO" id="PR:O95453"/>
<dbReference type="Proteomes" id="UP000005640">
    <property type="component" value="Chromosome 16"/>
</dbReference>
<dbReference type="RNAct" id="O95453">
    <property type="molecule type" value="protein"/>
</dbReference>
<dbReference type="Bgee" id="ENSG00000140694">
    <property type="expression patterns" value="Expressed in calcaneal tendon and 108 other cell types or tissues"/>
</dbReference>
<dbReference type="ExpressionAtlas" id="O95453">
    <property type="expression patterns" value="baseline and differential"/>
</dbReference>
<dbReference type="GO" id="GO:0005737">
    <property type="term" value="C:cytoplasm"/>
    <property type="evidence" value="ECO:0000304"/>
    <property type="project" value="ProtInc"/>
</dbReference>
<dbReference type="GO" id="GO:0005829">
    <property type="term" value="C:cytosol"/>
    <property type="evidence" value="ECO:0000304"/>
    <property type="project" value="Reactome"/>
</dbReference>
<dbReference type="GO" id="GO:0098978">
    <property type="term" value="C:glutamatergic synapse"/>
    <property type="evidence" value="ECO:0007669"/>
    <property type="project" value="Ensembl"/>
</dbReference>
<dbReference type="GO" id="GO:0016607">
    <property type="term" value="C:nuclear speck"/>
    <property type="evidence" value="ECO:0000314"/>
    <property type="project" value="HPA"/>
</dbReference>
<dbReference type="GO" id="GO:0005730">
    <property type="term" value="C:nucleolus"/>
    <property type="evidence" value="ECO:0000314"/>
    <property type="project" value="UniProtKB"/>
</dbReference>
<dbReference type="GO" id="GO:0005634">
    <property type="term" value="C:nucleus"/>
    <property type="evidence" value="ECO:0000318"/>
    <property type="project" value="GO_Central"/>
</dbReference>
<dbReference type="GO" id="GO:0098794">
    <property type="term" value="C:postsynapse"/>
    <property type="evidence" value="ECO:0007669"/>
    <property type="project" value="Ensembl"/>
</dbReference>
<dbReference type="GO" id="GO:0000175">
    <property type="term" value="F:3'-5'-RNA exonuclease activity"/>
    <property type="evidence" value="ECO:0000318"/>
    <property type="project" value="GO_Central"/>
</dbReference>
<dbReference type="GO" id="GO:0043169">
    <property type="term" value="F:cation binding"/>
    <property type="evidence" value="ECO:0000315"/>
    <property type="project" value="UniProtKB"/>
</dbReference>
<dbReference type="GO" id="GO:0046872">
    <property type="term" value="F:metal ion binding"/>
    <property type="evidence" value="ECO:0007669"/>
    <property type="project" value="UniProtKB-KW"/>
</dbReference>
<dbReference type="GO" id="GO:0003730">
    <property type="term" value="F:mRNA 3'-UTR binding"/>
    <property type="evidence" value="ECO:0000304"/>
    <property type="project" value="ProtInc"/>
</dbReference>
<dbReference type="GO" id="GO:0004518">
    <property type="term" value="F:nuclease activity"/>
    <property type="evidence" value="ECO:0000304"/>
    <property type="project" value="ProtInc"/>
</dbReference>
<dbReference type="GO" id="GO:0004535">
    <property type="term" value="F:poly(A)-specific ribonuclease activity"/>
    <property type="evidence" value="ECO:0000314"/>
    <property type="project" value="UniProtKB"/>
</dbReference>
<dbReference type="GO" id="GO:0019901">
    <property type="term" value="F:protein kinase binding"/>
    <property type="evidence" value="ECO:0000353"/>
    <property type="project" value="UniProtKB"/>
</dbReference>
<dbReference type="GO" id="GO:0003723">
    <property type="term" value="F:RNA binding"/>
    <property type="evidence" value="ECO:0007005"/>
    <property type="project" value="UniProtKB"/>
</dbReference>
<dbReference type="GO" id="GO:0070034">
    <property type="term" value="F:telomerase RNA binding"/>
    <property type="evidence" value="ECO:0000353"/>
    <property type="project" value="BHF-UCL"/>
</dbReference>
<dbReference type="GO" id="GO:0000495">
    <property type="term" value="P:box H/ACA sno(s)RNA 3'-end processing"/>
    <property type="evidence" value="ECO:0000314"/>
    <property type="project" value="UniProtKB"/>
</dbReference>
<dbReference type="GO" id="GO:0007292">
    <property type="term" value="P:female gamete generation"/>
    <property type="evidence" value="ECO:0000304"/>
    <property type="project" value="ProtInc"/>
</dbReference>
<dbReference type="GO" id="GO:0180035">
    <property type="term" value="P:lncRNA processing"/>
    <property type="evidence" value="ECO:0000315"/>
    <property type="project" value="BHF-UCL"/>
</dbReference>
<dbReference type="GO" id="GO:0010587">
    <property type="term" value="P:miRNA catabolic process"/>
    <property type="evidence" value="ECO:0000314"/>
    <property type="project" value="UniProtKB"/>
</dbReference>
<dbReference type="GO" id="GO:0000184">
    <property type="term" value="P:nuclear-transcribed mRNA catabolic process, nonsense-mediated decay"/>
    <property type="evidence" value="ECO:0007669"/>
    <property type="project" value="UniProtKB-KW"/>
</dbReference>
<dbReference type="GO" id="GO:0000289">
    <property type="term" value="P:nuclear-transcribed mRNA poly(A) tail shortening"/>
    <property type="evidence" value="ECO:0000318"/>
    <property type="project" value="GO_Central"/>
</dbReference>
<dbReference type="GO" id="GO:0071051">
    <property type="term" value="P:poly(A)-dependent snoRNA 3'-end processing"/>
    <property type="evidence" value="ECO:0000314"/>
    <property type="project" value="UniProtKB"/>
</dbReference>
<dbReference type="GO" id="GO:0032212">
    <property type="term" value="P:positive regulation of telomere maintenance via telomerase"/>
    <property type="evidence" value="ECO:0000315"/>
    <property type="project" value="BHF-UCL"/>
</dbReference>
<dbReference type="GO" id="GO:1990431">
    <property type="term" value="P:priRNA 3'-end processing"/>
    <property type="evidence" value="ECO:0000318"/>
    <property type="project" value="GO_Central"/>
</dbReference>
<dbReference type="GO" id="GO:1904872">
    <property type="term" value="P:regulation of telomerase RNA localization to Cajal body"/>
    <property type="evidence" value="ECO:0000315"/>
    <property type="project" value="BHF-UCL"/>
</dbReference>
<dbReference type="GO" id="GO:0009451">
    <property type="term" value="P:RNA modification"/>
    <property type="evidence" value="ECO:0000304"/>
    <property type="project" value="ProtInc"/>
</dbReference>
<dbReference type="GO" id="GO:1990432">
    <property type="term" value="P:siRNA 3'-end processing"/>
    <property type="evidence" value="ECO:0000318"/>
    <property type="project" value="GO_Central"/>
</dbReference>
<dbReference type="GO" id="GO:0090669">
    <property type="term" value="P:telomerase RNA stabilization"/>
    <property type="evidence" value="ECO:0000315"/>
    <property type="project" value="BHF-UCL"/>
</dbReference>
<dbReference type="CDD" id="cd02637">
    <property type="entry name" value="R3H_PARN"/>
    <property type="match status" value="1"/>
</dbReference>
<dbReference type="CDD" id="cd12428">
    <property type="entry name" value="RRM_PARN"/>
    <property type="match status" value="1"/>
</dbReference>
<dbReference type="FunFam" id="3.30.420.10:FF:000035">
    <property type="entry name" value="Poly(A)-specific ribonuclease PARN"/>
    <property type="match status" value="1"/>
</dbReference>
<dbReference type="FunFam" id="3.30.70.330:FF:000196">
    <property type="entry name" value="Poly(A)-specific ribonuclease PARN"/>
    <property type="match status" value="1"/>
</dbReference>
<dbReference type="FunFam" id="3.30.420.10:FF:000042">
    <property type="entry name" value="poly(A)-specific ribonuclease PARN"/>
    <property type="match status" value="1"/>
</dbReference>
<dbReference type="Gene3D" id="3.30.70.330">
    <property type="match status" value="1"/>
</dbReference>
<dbReference type="Gene3D" id="3.30.420.10">
    <property type="entry name" value="Ribonuclease H-like superfamily/Ribonuclease H"/>
    <property type="match status" value="2"/>
</dbReference>
<dbReference type="InterPro" id="IPR051181">
    <property type="entry name" value="CAF1_poly(A)_ribonucleases"/>
</dbReference>
<dbReference type="InterPro" id="IPR012677">
    <property type="entry name" value="Nucleotide-bd_a/b_plait_sf"/>
</dbReference>
<dbReference type="InterPro" id="IPR034042">
    <property type="entry name" value="PARN_R3H"/>
</dbReference>
<dbReference type="InterPro" id="IPR014789">
    <property type="entry name" value="PolyA-riboNase_RNA-binding"/>
</dbReference>
<dbReference type="InterPro" id="IPR001374">
    <property type="entry name" value="R3H_dom"/>
</dbReference>
<dbReference type="InterPro" id="IPR036867">
    <property type="entry name" value="R3H_dom_sf"/>
</dbReference>
<dbReference type="InterPro" id="IPR035979">
    <property type="entry name" value="RBD_domain_sf"/>
</dbReference>
<dbReference type="InterPro" id="IPR006941">
    <property type="entry name" value="RNase_CAF1"/>
</dbReference>
<dbReference type="InterPro" id="IPR012337">
    <property type="entry name" value="RNaseH-like_sf"/>
</dbReference>
<dbReference type="InterPro" id="IPR036397">
    <property type="entry name" value="RNaseH_sf"/>
</dbReference>
<dbReference type="PANTHER" id="PTHR15092">
    <property type="entry name" value="POLY A -SPECIFIC RIBONUCLEASE/TARGET OF EGR1, MEMBER 1"/>
    <property type="match status" value="1"/>
</dbReference>
<dbReference type="PANTHER" id="PTHR15092:SF44">
    <property type="entry name" value="POLY(A)-SPECIFIC RIBONUCLEASE PARN"/>
    <property type="match status" value="1"/>
</dbReference>
<dbReference type="Pfam" id="PF04857">
    <property type="entry name" value="CAF1"/>
    <property type="match status" value="1"/>
</dbReference>
<dbReference type="Pfam" id="PF08675">
    <property type="entry name" value="RNA_bind"/>
    <property type="match status" value="1"/>
</dbReference>
<dbReference type="SUPFAM" id="SSF82708">
    <property type="entry name" value="R3H domain"/>
    <property type="match status" value="1"/>
</dbReference>
<dbReference type="SUPFAM" id="SSF53098">
    <property type="entry name" value="Ribonuclease H-like"/>
    <property type="match status" value="1"/>
</dbReference>
<dbReference type="SUPFAM" id="SSF54928">
    <property type="entry name" value="RNA-binding domain, RBD"/>
    <property type="match status" value="1"/>
</dbReference>
<dbReference type="PROSITE" id="PS51061">
    <property type="entry name" value="R3H"/>
    <property type="match status" value="1"/>
</dbReference>
<feature type="chain" id="PRO_0000212851" description="Poly(A)-specific ribonuclease PARN">
    <location>
        <begin position="1"/>
        <end position="639"/>
    </location>
</feature>
<feature type="domain" description="R3H" evidence="2">
    <location>
        <begin position="178"/>
        <end position="245"/>
    </location>
</feature>
<feature type="region of interest" description="Disordered" evidence="3">
    <location>
        <begin position="560"/>
        <end position="639"/>
    </location>
</feature>
<feature type="compositionally biased region" description="Basic residues" evidence="3">
    <location>
        <begin position="606"/>
        <end position="615"/>
    </location>
</feature>
<feature type="binding site" evidence="25">
    <location>
        <position position="28"/>
    </location>
    <ligand>
        <name>a divalent metal cation</name>
        <dbReference type="ChEBI" id="CHEBI:60240"/>
        <note>catalytic</note>
    </ligand>
</feature>
<feature type="binding site" evidence="25">
    <location>
        <position position="30"/>
    </location>
    <ligand>
        <name>a divalent metal cation</name>
        <dbReference type="ChEBI" id="CHEBI:60240"/>
        <note>catalytic</note>
    </ligand>
</feature>
<feature type="binding site" evidence="25">
    <location>
        <position position="292"/>
    </location>
    <ligand>
        <name>a divalent metal cation</name>
        <dbReference type="ChEBI" id="CHEBI:60240"/>
        <note>catalytic</note>
    </ligand>
</feature>
<feature type="binding site" evidence="25">
    <location>
        <position position="382"/>
    </location>
    <ligand>
        <name>a divalent metal cation</name>
        <dbReference type="ChEBI" id="CHEBI:60240"/>
        <note>catalytic</note>
    </ligand>
</feature>
<feature type="site" description="Interaction with poly(A)" evidence="15">
    <location>
        <position position="326"/>
    </location>
</feature>
<feature type="modified residue" description="Phosphoserine" evidence="26 29 32">
    <location>
        <position position="163"/>
    </location>
</feature>
<feature type="modified residue" description="Phosphoserine" evidence="32">
    <location>
        <position position="167"/>
    </location>
</feature>
<feature type="modified residue" description="N6-acetyllysine" evidence="28">
    <location>
        <position position="220"/>
    </location>
</feature>
<feature type="modified residue" description="N6-acetyllysine" evidence="28">
    <location>
        <position position="499"/>
    </location>
</feature>
<feature type="modified residue" description="Phosphoserine" evidence="32">
    <location>
        <position position="530"/>
    </location>
</feature>
<feature type="modified residue" description="Phosphoserine; by MAPKAPK2" evidence="17 26 27 30 31 32 33">
    <location>
        <position position="557"/>
    </location>
</feature>
<feature type="modified residue" description="Phosphoserine" evidence="1">
    <location>
        <position position="583"/>
    </location>
</feature>
<feature type="modified residue" description="Phosphoserine" evidence="1">
    <location>
        <position position="587"/>
    </location>
</feature>
<feature type="modified residue" description="Phosphoserine" evidence="30 31 32">
    <location>
        <position position="619"/>
    </location>
</feature>
<feature type="modified residue" description="Phosphoserine" evidence="31 32">
    <location>
        <position position="623"/>
    </location>
</feature>
<feature type="modified residue" description="Phosphoserine" evidence="30">
    <location>
        <position position="628"/>
    </location>
</feature>
<feature type="modified residue" description="Phosphothreonine" evidence="30">
    <location>
        <position position="631"/>
    </location>
</feature>
<feature type="splice variant" id="VSP_042846" description="In isoform 2." evidence="24">
    <location>
        <begin position="1"/>
        <end position="61"/>
    </location>
</feature>
<feature type="splice variant" id="VSP_042847" description="In isoform 3." evidence="24">
    <location>
        <begin position="53"/>
        <end position="98"/>
    </location>
</feature>
<feature type="splice variant" id="VSP_057269" description="In isoform 4." evidence="24">
    <location>
        <begin position="59"/>
        <end position="233"/>
    </location>
</feature>
<feature type="sequence variant" id="VAR_073782" description="In DKCB6; dbSNP:rs786200999." evidence="22">
    <original>A</original>
    <variation>V</variation>
    <location>
        <position position="383"/>
    </location>
</feature>
<feature type="sequence variant" id="VAR_073783" description="In PFBMFT4; dbSNP:rs777090017." evidence="21">
    <original>K</original>
    <variation>R</variation>
    <location>
        <position position="421"/>
    </location>
</feature>
<feature type="mutagenesis site" description="Loss of function but does not abolish ability to bind RNA. Induces a decrease in degradation of mRNAs containing AREs." evidence="8 10 14">
    <original>D</original>
    <variation>A</variation>
    <location>
        <position position="28"/>
    </location>
</feature>
<feature type="mutagenesis site" description="Loss of function in the presence of Mg(2+) but not in the presence of Mn(2+), Zn(2+), Co(2+) or Cd(2+)." evidence="8 10 14">
    <original>D</original>
    <variation>C</variation>
    <location>
        <position position="28"/>
    </location>
</feature>
<feature type="mutagenesis site" description="Loss of function but does not abolish ability to bind RNA. Induces a decrease in degradation of mRNAs containing AREs." evidence="8 10 14">
    <original>E</original>
    <variation>A</variation>
    <location>
        <position position="30"/>
    </location>
</feature>
<feature type="mutagenesis site" description="Loss of function in the presence of Mg(2+), Mn(2+), Zn(2+), Co(2+) or Cd(2+)." evidence="8 10 14">
    <original>E</original>
    <variation>C</variation>
    <location>
        <position position="30"/>
    </location>
</feature>
<feature type="mutagenesis site" description="Reduced affinity for poly(A). Loss of activity." evidence="15">
    <original>F</original>
    <variation>A</variation>
    <location>
        <position position="31"/>
    </location>
</feature>
<feature type="mutagenesis site" description="Reduced affinity for poly(A). Strongly reduced activity." evidence="15">
    <original>I</original>
    <variation>A</variation>
    <location>
        <position position="34"/>
    </location>
</feature>
<feature type="mutagenesis site" description="Loss of dimerization. Loss of activity." evidence="15">
    <original>I</original>
    <variation>A</variation>
    <location>
        <position position="113"/>
    </location>
</feature>
<feature type="mutagenesis site" description="Reduced affinity for poly(A). Little effect on activity.">
    <original>F</original>
    <variation>A</variation>
    <location>
        <position position="115"/>
    </location>
</feature>
<feature type="mutagenesis site" description="Loss of dimerization. Loss of activity." evidence="15">
    <original>F</original>
    <variation>A</variation>
    <location>
        <position position="123"/>
    </location>
</feature>
<feature type="mutagenesis site" description="Loss of function but does not abolish ability to bind RNA." evidence="8 14">
    <original>D</original>
    <variation>A</variation>
    <location>
        <position position="292"/>
    </location>
</feature>
<feature type="mutagenesis site" description="Loss of function in the presence of Mg(2+) but not in the presence of Mn(2+), Zn(2+), Co(2+) or Cd(2+)." evidence="8 14">
    <original>D</original>
    <variation>C</variation>
    <location>
        <position position="292"/>
    </location>
</feature>
<feature type="mutagenesis site" description="Reduced affinity for poly(A). Little effect on activity.">
    <original>K</original>
    <variation>A</variation>
    <location>
        <position position="326"/>
    </location>
</feature>
<feature type="mutagenesis site" description="Loss of activity." evidence="15">
    <original>H</original>
    <variation>A</variation>
    <location>
        <position position="377"/>
    </location>
</feature>
<feature type="mutagenesis site" description="Loss of function but does not abolish ability to bind RNA. Induces a decrease in degradation of mRNAs containing AREs." evidence="8 10 14">
    <original>D</original>
    <variation>A</variation>
    <location>
        <position position="382"/>
    </location>
</feature>
<feature type="mutagenesis site" description="Loss of function in the presence of Mg(2+) but not in the presence of Mn(2+), Zn(2+), Co(2+) or Cd(2+)." evidence="8 10 14">
    <original>D</original>
    <variation>C</variation>
    <location>
        <position position="382"/>
    </location>
</feature>
<feature type="mutagenesis site" description="Strong reduction of phosphorylation by MAPKAPK2.">
    <original>S</original>
    <variation>A</variation>
    <location>
        <position position="557"/>
    </location>
</feature>
<feature type="helix" evidence="34">
    <location>
        <begin position="5"/>
        <end position="21"/>
    </location>
</feature>
<feature type="strand" evidence="34">
    <location>
        <begin position="23"/>
        <end position="32"/>
    </location>
</feature>
<feature type="strand" evidence="34">
    <location>
        <begin position="36"/>
        <end position="38"/>
    </location>
</feature>
<feature type="helix" evidence="34">
    <location>
        <begin position="50"/>
        <end position="60"/>
    </location>
</feature>
<feature type="turn" evidence="34">
    <location>
        <begin position="61"/>
        <end position="63"/>
    </location>
</feature>
<feature type="strand" evidence="34">
    <location>
        <begin position="66"/>
        <end position="77"/>
    </location>
</feature>
<feature type="turn" evidence="34">
    <location>
        <begin position="78"/>
        <end position="81"/>
    </location>
</feature>
<feature type="strand" evidence="34">
    <location>
        <begin position="82"/>
        <end position="92"/>
    </location>
</feature>
<feature type="strand" evidence="34">
    <location>
        <begin position="97"/>
        <end position="101"/>
    </location>
</feature>
<feature type="strand" evidence="34">
    <location>
        <begin position="105"/>
        <end position="109"/>
    </location>
</feature>
<feature type="helix" evidence="34">
    <location>
        <begin position="110"/>
        <end position="118"/>
    </location>
</feature>
<feature type="helix" evidence="34">
    <location>
        <begin position="123"/>
        <end position="127"/>
    </location>
</feature>
<feature type="helix" evidence="34">
    <location>
        <begin position="136"/>
        <end position="141"/>
    </location>
</feature>
<feature type="helix" evidence="35">
    <location>
        <begin position="175"/>
        <end position="177"/>
    </location>
</feature>
<feature type="helix" evidence="35">
    <location>
        <begin position="178"/>
        <end position="192"/>
    </location>
</feature>
<feature type="helix" evidence="35">
    <location>
        <begin position="207"/>
        <end position="217"/>
    </location>
</feature>
<feature type="turn" evidence="35">
    <location>
        <begin position="222"/>
        <end position="224"/>
    </location>
</feature>
<feature type="strand" evidence="35">
    <location>
        <begin position="228"/>
        <end position="231"/>
    </location>
</feature>
<feature type="strand" evidence="35">
    <location>
        <begin position="237"/>
        <end position="240"/>
    </location>
</feature>
<feature type="strand" evidence="35">
    <location>
        <begin position="245"/>
        <end position="248"/>
    </location>
</feature>
<feature type="turn" evidence="35">
    <location>
        <begin position="249"/>
        <end position="252"/>
    </location>
</feature>
<feature type="helix" evidence="34">
    <location>
        <begin position="260"/>
        <end position="265"/>
    </location>
</feature>
<feature type="helix" evidence="34">
    <location>
        <begin position="271"/>
        <end position="280"/>
    </location>
</feature>
<feature type="strand" evidence="34">
    <location>
        <begin position="283"/>
        <end position="288"/>
    </location>
</feature>
<feature type="helix" evidence="34">
    <location>
        <begin position="290"/>
        <end position="300"/>
    </location>
</feature>
<feature type="helix" evidence="34">
    <location>
        <begin position="308"/>
        <end position="318"/>
    </location>
</feature>
<feature type="strand" evidence="34">
    <location>
        <begin position="320"/>
        <end position="324"/>
    </location>
</feature>
<feature type="helix" evidence="34">
    <location>
        <begin position="325"/>
        <end position="329"/>
    </location>
</feature>
<feature type="turn" evidence="34">
    <location>
        <begin position="332"/>
        <end position="337"/>
    </location>
</feature>
<feature type="helix" evidence="34">
    <location>
        <begin position="343"/>
        <end position="349"/>
    </location>
</feature>
<feature type="strand" evidence="34">
    <location>
        <begin position="360"/>
        <end position="362"/>
    </location>
</feature>
<feature type="helix" evidence="34">
    <location>
        <begin position="379"/>
        <end position="397"/>
    </location>
</feature>
<feature type="helix" evidence="34">
    <location>
        <begin position="398"/>
        <end position="400"/>
    </location>
</feature>
<feature type="strand" evidence="34">
    <location>
        <begin position="401"/>
        <end position="403"/>
    </location>
</feature>
<feature type="turn" evidence="35">
    <location>
        <begin position="413"/>
        <end position="415"/>
    </location>
</feature>
<feature type="helix" evidence="34">
    <location>
        <begin position="416"/>
        <end position="418"/>
    </location>
</feature>
<feature type="strand" evidence="35">
    <location>
        <begin position="419"/>
        <end position="429"/>
    </location>
</feature>
<feature type="strand" evidence="36">
    <location>
        <begin position="445"/>
        <end position="451"/>
    </location>
</feature>
<feature type="helix" evidence="36">
    <location>
        <begin position="458"/>
        <end position="464"/>
    </location>
</feature>
<feature type="turn" evidence="36">
    <location>
        <begin position="465"/>
        <end position="467"/>
    </location>
</feature>
<feature type="strand" evidence="36">
    <location>
        <begin position="468"/>
        <end position="477"/>
    </location>
</feature>
<feature type="strand" evidence="36">
    <location>
        <begin position="480"/>
        <end position="488"/>
    </location>
</feature>
<feature type="helix" evidence="36">
    <location>
        <begin position="490"/>
        <end position="498"/>
    </location>
</feature>
<feature type="helix" evidence="36">
    <location>
        <begin position="509"/>
        <end position="513"/>
    </location>
</feature>
<accession>O95453</accession>
<accession>B2RCB3</accession>
<accession>B4DDG8</accession>
<accession>B4DSB0</accession>
<accession>B4DWR4</accession>
<accession>B4E1H6</accession>
<name>PARN_HUMAN</name>
<evidence type="ECO:0000250" key="1">
    <source>
        <dbReference type="UniProtKB" id="Q8VDG3"/>
    </source>
</evidence>
<evidence type="ECO:0000255" key="2">
    <source>
        <dbReference type="PROSITE-ProRule" id="PRU00382"/>
    </source>
</evidence>
<evidence type="ECO:0000256" key="3">
    <source>
        <dbReference type="SAM" id="MobiDB-lite"/>
    </source>
</evidence>
<evidence type="ECO:0000269" key="4">
    <source>
    </source>
</evidence>
<evidence type="ECO:0000269" key="5">
    <source>
    </source>
</evidence>
<evidence type="ECO:0000269" key="6">
    <source>
    </source>
</evidence>
<evidence type="ECO:0000269" key="7">
    <source>
    </source>
</evidence>
<evidence type="ECO:0000269" key="8">
    <source>
    </source>
</evidence>
<evidence type="ECO:0000269" key="9">
    <source>
    </source>
</evidence>
<evidence type="ECO:0000269" key="10">
    <source>
    </source>
</evidence>
<evidence type="ECO:0000269" key="11">
    <source>
    </source>
</evidence>
<evidence type="ECO:0000269" key="12">
    <source>
    </source>
</evidence>
<evidence type="ECO:0000269" key="13">
    <source>
    </source>
</evidence>
<evidence type="ECO:0000269" key="14">
    <source>
    </source>
</evidence>
<evidence type="ECO:0000269" key="15">
    <source>
    </source>
</evidence>
<evidence type="ECO:0000269" key="16">
    <source>
    </source>
</evidence>
<evidence type="ECO:0000269" key="17">
    <source>
    </source>
</evidence>
<evidence type="ECO:0000269" key="18">
    <source>
    </source>
</evidence>
<evidence type="ECO:0000269" key="19">
    <source>
    </source>
</evidence>
<evidence type="ECO:0000269" key="20">
    <source>
    </source>
</evidence>
<evidence type="ECO:0000269" key="21">
    <source>
    </source>
</evidence>
<evidence type="ECO:0000269" key="22">
    <source>
    </source>
</evidence>
<evidence type="ECO:0000269" key="23">
    <source>
    </source>
</evidence>
<evidence type="ECO:0000303" key="24">
    <source>
    </source>
</evidence>
<evidence type="ECO:0000305" key="25"/>
<evidence type="ECO:0007744" key="26">
    <source>
    </source>
</evidence>
<evidence type="ECO:0007744" key="27">
    <source>
    </source>
</evidence>
<evidence type="ECO:0007744" key="28">
    <source>
    </source>
</evidence>
<evidence type="ECO:0007744" key="29">
    <source>
    </source>
</evidence>
<evidence type="ECO:0007744" key="30">
    <source>
    </source>
</evidence>
<evidence type="ECO:0007744" key="31">
    <source>
    </source>
</evidence>
<evidence type="ECO:0007744" key="32">
    <source>
    </source>
</evidence>
<evidence type="ECO:0007744" key="33">
    <source>
    </source>
</evidence>
<evidence type="ECO:0007829" key="34">
    <source>
        <dbReference type="PDB" id="2A1R"/>
    </source>
</evidence>
<evidence type="ECO:0007829" key="35">
    <source>
        <dbReference type="PDB" id="2A1S"/>
    </source>
</evidence>
<evidence type="ECO:0007829" key="36">
    <source>
        <dbReference type="PDB" id="3CTR"/>
    </source>
</evidence>
<keyword id="KW-0002">3D-structure</keyword>
<keyword id="KW-0007">Acetylation</keyword>
<keyword id="KW-0025">Alternative splicing</keyword>
<keyword id="KW-0963">Cytoplasm</keyword>
<keyword id="KW-0225">Disease variant</keyword>
<keyword id="KW-1011">Dyskeratosis congenita</keyword>
<keyword id="KW-0269">Exonuclease</keyword>
<keyword id="KW-0378">Hydrolase</keyword>
<keyword id="KW-0460">Magnesium</keyword>
<keyword id="KW-0479">Metal-binding</keyword>
<keyword id="KW-0866">Nonsense-mediated mRNA decay</keyword>
<keyword id="KW-0540">Nuclease</keyword>
<keyword id="KW-0539">Nucleus</keyword>
<keyword id="KW-0597">Phosphoprotein</keyword>
<keyword id="KW-1267">Proteomics identification</keyword>
<keyword id="KW-1185">Reference proteome</keyword>
<keyword id="KW-0694">RNA-binding</keyword>
<proteinExistence type="evidence at protein level"/>
<protein>
    <recommendedName>
        <fullName>Poly(A)-specific ribonuclease PARN</fullName>
        <ecNumber>3.1.13.4</ecNumber>
    </recommendedName>
    <alternativeName>
        <fullName>Deadenylating nuclease</fullName>
    </alternativeName>
    <alternativeName>
        <fullName>Deadenylation nuclease</fullName>
    </alternativeName>
    <alternativeName>
        <fullName>Polyadenylate-specific ribonuclease</fullName>
    </alternativeName>
</protein>
<organism>
    <name type="scientific">Homo sapiens</name>
    <name type="common">Human</name>
    <dbReference type="NCBI Taxonomy" id="9606"/>
    <lineage>
        <taxon>Eukaryota</taxon>
        <taxon>Metazoa</taxon>
        <taxon>Chordata</taxon>
        <taxon>Craniata</taxon>
        <taxon>Vertebrata</taxon>
        <taxon>Euteleostomi</taxon>
        <taxon>Mammalia</taxon>
        <taxon>Eutheria</taxon>
        <taxon>Euarchontoglires</taxon>
        <taxon>Primates</taxon>
        <taxon>Haplorrhini</taxon>
        <taxon>Catarrhini</taxon>
        <taxon>Hominidae</taxon>
        <taxon>Homo</taxon>
    </lineage>
</organism>